<gene>
    <name type="primary">fruB</name>
    <name type="synonym">fpr</name>
    <name evidence="7" type="synonym">fruF</name>
    <name type="ordered locus">STM2206</name>
</gene>
<sequence>MFQLSVQDIHPGEQAGNKEEAIRQIAAALAQAGNVAGGYVDGMLAREQQTSTFLGNGIAIPHGTTDTRDQVLKTGVQVFQFPQGVTWGEGQVAYVAIGIAASSDEHLGLLRQLTHVLSDDSVAEQLKSATTAEELRALLMGEKQSEQLKLDNETMTLDVIASSLVTLQALNAARLKEAGAVDAAFVAKTINDSPMNLGQGIWLNDSAEGNLRSAVAVSRATQAFDVEGEKAALLVTVAMNDEQPIAVLKRLGDLLLNNKADRLLSADAATLLALLTSDDALTDDVLSAEFVVRNEHGLHARPGTMLVNTIKQFNSEITVTNLDGTGKPANGRSLMKVVALGVKKGHRLRFTAQGEDAEQALKAIGDAIAAGLGEGA</sequence>
<reference key="1">
    <citation type="journal article" date="1989" name="Mol. Gen. Genet.">
        <title>The PEP: fructose phosphotransferase system in Salmonella typhimurium: FPr combines enzyme IIIFru and pseudo-HPr activities.</title>
        <authorList>
            <person name="Geerse R.H."/>
            <person name="Izzo F."/>
            <person name="Postma P.W."/>
        </authorList>
    </citation>
    <scope>NUCLEOTIDE SEQUENCE [GENOMIC DNA]</scope>
    <scope>FUNCTION</scope>
    <scope>CATALYTIC ACTIVITY</scope>
    <scope>INDUCTION</scope>
</reference>
<reference key="2">
    <citation type="journal article" date="2001" name="Nature">
        <title>Complete genome sequence of Salmonella enterica serovar Typhimurium LT2.</title>
        <authorList>
            <person name="McClelland M."/>
            <person name="Sanderson K.E."/>
            <person name="Spieth J."/>
            <person name="Clifton S.W."/>
            <person name="Latreille P."/>
            <person name="Courtney L."/>
            <person name="Porwollik S."/>
            <person name="Ali J."/>
            <person name="Dante M."/>
            <person name="Du F."/>
            <person name="Hou S."/>
            <person name="Layman D."/>
            <person name="Leonard S."/>
            <person name="Nguyen C."/>
            <person name="Scott K."/>
            <person name="Holmes A."/>
            <person name="Grewal N."/>
            <person name="Mulvaney E."/>
            <person name="Ryan E."/>
            <person name="Sun H."/>
            <person name="Florea L."/>
            <person name="Miller W."/>
            <person name="Stoneking T."/>
            <person name="Nhan M."/>
            <person name="Waterston R."/>
            <person name="Wilson R.K."/>
        </authorList>
    </citation>
    <scope>NUCLEOTIDE SEQUENCE [LARGE SCALE GENOMIC DNA]</scope>
    <source>
        <strain>LT2 / SGSC1412 / ATCC 700720</strain>
    </source>
</reference>
<reference key="3">
    <citation type="journal article" date="1988" name="J. Biol. Chem.">
        <title>Purification and characterization of the fructose-inducible HPr-like protein, FPr, and the fructose-specific enzyme III of the phosphoenolpyruvate: sugar phosphotransferase system of Salmonella typhimurium.</title>
        <authorList>
            <person name="Sutrina S.L."/>
            <person name="Chin A.M."/>
            <person name="Esch F."/>
            <person name="Saier M.H. Jr."/>
        </authorList>
    </citation>
    <scope>PROTEIN SEQUENCE OF 250-269</scope>
    <scope>FUNCTION</scope>
    <scope>CATALYTIC ACTIVITY</scope>
    <scope>DOMAIN</scope>
</reference>
<dbReference type="EMBL" id="X14243">
    <property type="protein sequence ID" value="CAA32459.1"/>
    <property type="molecule type" value="Genomic_DNA"/>
</dbReference>
<dbReference type="EMBL" id="AE006468">
    <property type="protein sequence ID" value="AAL21110.1"/>
    <property type="molecule type" value="Genomic_DNA"/>
</dbReference>
<dbReference type="PIR" id="JE0023">
    <property type="entry name" value="JE0023"/>
</dbReference>
<dbReference type="RefSeq" id="NP_461151.1">
    <property type="nucleotide sequence ID" value="NC_003197.2"/>
</dbReference>
<dbReference type="RefSeq" id="WP_000487287.1">
    <property type="nucleotide sequence ID" value="NC_003197.2"/>
</dbReference>
<dbReference type="SMR" id="P17127"/>
<dbReference type="STRING" id="99287.STM2206"/>
<dbReference type="PaxDb" id="99287-STM2206"/>
<dbReference type="GeneID" id="1253728"/>
<dbReference type="KEGG" id="stm:STM2206"/>
<dbReference type="PATRIC" id="fig|99287.12.peg.2335"/>
<dbReference type="HOGENOM" id="CLU_046384_0_0_6"/>
<dbReference type="OMA" id="WGEGNIA"/>
<dbReference type="PhylomeDB" id="P17127"/>
<dbReference type="BioCyc" id="SENT99287:STM2206-MONOMER"/>
<dbReference type="SABIO-RK" id="P17127"/>
<dbReference type="Proteomes" id="UP000001014">
    <property type="component" value="Chromosome"/>
</dbReference>
<dbReference type="GO" id="GO:0005737">
    <property type="term" value="C:cytoplasm"/>
    <property type="evidence" value="ECO:0007669"/>
    <property type="project" value="UniProtKB-SubCell"/>
</dbReference>
<dbReference type="GO" id="GO:0005886">
    <property type="term" value="C:plasma membrane"/>
    <property type="evidence" value="ECO:0000318"/>
    <property type="project" value="GO_Central"/>
</dbReference>
<dbReference type="GO" id="GO:0016301">
    <property type="term" value="F:kinase activity"/>
    <property type="evidence" value="ECO:0007669"/>
    <property type="project" value="UniProtKB-KW"/>
</dbReference>
<dbReference type="GO" id="GO:0090563">
    <property type="term" value="F:protein-phosphocysteine-sugar phosphotransferase activity"/>
    <property type="evidence" value="ECO:0000318"/>
    <property type="project" value="GO_Central"/>
</dbReference>
<dbReference type="GO" id="GO:0009401">
    <property type="term" value="P:phosphoenolpyruvate-dependent sugar phosphotransferase system"/>
    <property type="evidence" value="ECO:0000318"/>
    <property type="project" value="GO_Central"/>
</dbReference>
<dbReference type="CDD" id="cd00367">
    <property type="entry name" value="PTS-HPr_like"/>
    <property type="match status" value="1"/>
</dbReference>
<dbReference type="CDD" id="cd00211">
    <property type="entry name" value="PTS_IIA_fru"/>
    <property type="match status" value="1"/>
</dbReference>
<dbReference type="FunFam" id="3.30.1340.10:FF:000005">
    <property type="entry name" value="Fructose-specific PTS system IIA component"/>
    <property type="match status" value="1"/>
</dbReference>
<dbReference type="FunFam" id="3.40.930.10:FF:000006">
    <property type="entry name" value="Fructose-specific PTS system IIA component"/>
    <property type="match status" value="1"/>
</dbReference>
<dbReference type="Gene3D" id="3.30.1340.10">
    <property type="entry name" value="HPr-like"/>
    <property type="match status" value="1"/>
</dbReference>
<dbReference type="Gene3D" id="3.40.930.10">
    <property type="entry name" value="Mannitol-specific EII, Chain A"/>
    <property type="match status" value="1"/>
</dbReference>
<dbReference type="InterPro" id="IPR000032">
    <property type="entry name" value="HPr-like"/>
</dbReference>
<dbReference type="InterPro" id="IPR035895">
    <property type="entry name" value="HPr-like_sf"/>
</dbReference>
<dbReference type="InterPro" id="IPR016152">
    <property type="entry name" value="PTrfase/Anion_transptr"/>
</dbReference>
<dbReference type="InterPro" id="IPR002178">
    <property type="entry name" value="PTS_EIIA_type-2_dom"/>
</dbReference>
<dbReference type="InterPro" id="IPR001020">
    <property type="entry name" value="PTS_HPr_His_P_site"/>
</dbReference>
<dbReference type="InterPro" id="IPR002114">
    <property type="entry name" value="PTS_HPr_Ser_P_site"/>
</dbReference>
<dbReference type="InterPro" id="IPR050893">
    <property type="entry name" value="Sugar_PTS"/>
</dbReference>
<dbReference type="NCBIfam" id="NF008319">
    <property type="entry name" value="PRK11109.1"/>
    <property type="match status" value="1"/>
</dbReference>
<dbReference type="NCBIfam" id="TIGR01003">
    <property type="entry name" value="PTS_HPr_family"/>
    <property type="match status" value="1"/>
</dbReference>
<dbReference type="PANTHER" id="PTHR30181">
    <property type="entry name" value="MANNITOL PERMEASE IIC COMPONENT"/>
    <property type="match status" value="1"/>
</dbReference>
<dbReference type="PANTHER" id="PTHR30181:SF3">
    <property type="entry name" value="MULTIPHOSPHORYL TRANSFER PROTEIN"/>
    <property type="match status" value="1"/>
</dbReference>
<dbReference type="Pfam" id="PF00381">
    <property type="entry name" value="PTS-HPr"/>
    <property type="match status" value="1"/>
</dbReference>
<dbReference type="Pfam" id="PF00359">
    <property type="entry name" value="PTS_EIIA_2"/>
    <property type="match status" value="1"/>
</dbReference>
<dbReference type="PRINTS" id="PR00107">
    <property type="entry name" value="PHOSPHOCPHPR"/>
</dbReference>
<dbReference type="SUPFAM" id="SSF55594">
    <property type="entry name" value="HPr-like"/>
    <property type="match status" value="1"/>
</dbReference>
<dbReference type="SUPFAM" id="SSF55804">
    <property type="entry name" value="Phoshotransferase/anion transport protein"/>
    <property type="match status" value="2"/>
</dbReference>
<dbReference type="PROSITE" id="PS51094">
    <property type="entry name" value="PTS_EIIA_TYPE_2"/>
    <property type="match status" value="1"/>
</dbReference>
<dbReference type="PROSITE" id="PS00372">
    <property type="entry name" value="PTS_EIIA_TYPE_2_HIS"/>
    <property type="match status" value="1"/>
</dbReference>
<dbReference type="PROSITE" id="PS51350">
    <property type="entry name" value="PTS_HPR_DOM"/>
    <property type="match status" value="1"/>
</dbReference>
<dbReference type="PROSITE" id="PS00369">
    <property type="entry name" value="PTS_HPR_HIS"/>
    <property type="match status" value="1"/>
</dbReference>
<dbReference type="PROSITE" id="PS00589">
    <property type="entry name" value="PTS_HPR_SER"/>
    <property type="match status" value="1"/>
</dbReference>
<accession>P17127</accession>
<comment type="function">
    <text evidence="5 6">The phosphoenolpyruvate-dependent sugar phosphotransferase system (sugar PTS), a major carbohydrate active transport system, catalyzes the phosphorylation of incoming sugar substrates concomitantly with their translocation across the cell membrane. The enzyme II FruAB PTS system is involved in fructose transport.</text>
</comment>
<comment type="subcellular location">
    <subcellularLocation>
        <location evidence="8">Cytoplasm</location>
    </subcellularLocation>
</comment>
<comment type="induction">
    <text evidence="5">Induced by fructose and repressed by FruR.</text>
</comment>
<comment type="domain">
    <text evidence="3">The PTS EIIA type-2 domain is phosphorylated by phospho-HPr on a histidyl residue. Then, it transfers the phosphoryl group to the PTS EIIB type-2 domain.</text>
</comment>
<comment type="domain">
    <text evidence="6">In contrast to classical PTS systems, the fructose-specific PTS has no requirement for HPr; FruB combines a IIA domain with a HPr domain.</text>
</comment>
<keyword id="KW-0963">Cytoplasm</keyword>
<keyword id="KW-0903">Direct protein sequencing</keyword>
<keyword id="KW-0418">Kinase</keyword>
<keyword id="KW-0597">Phosphoprotein</keyword>
<keyword id="KW-0598">Phosphotransferase system</keyword>
<keyword id="KW-1185">Reference proteome</keyword>
<keyword id="KW-0762">Sugar transport</keyword>
<keyword id="KW-0808">Transferase</keyword>
<keyword id="KW-0813">Transport</keyword>
<proteinExistence type="evidence at protein level"/>
<feature type="chain" id="PRO_0000186519" description="Multiphosphoryl transfer protein">
    <location>
        <begin position="1"/>
        <end position="376"/>
    </location>
</feature>
<feature type="domain" description="PTS EIIA type-2" evidence="3">
    <location>
        <begin position="2"/>
        <end position="142"/>
    </location>
</feature>
<feature type="domain" description="HPr" evidence="4">
    <location>
        <begin position="285"/>
        <end position="375"/>
    </location>
</feature>
<feature type="region of interest" description="M domain" evidence="1">
    <location>
        <begin position="156"/>
        <end position="284"/>
    </location>
</feature>
<feature type="active site" description="Tele-phosphohistidine intermediate; for EIIA activity" evidence="3">
    <location>
        <position position="62"/>
    </location>
</feature>
<feature type="active site" description="Pros-phosphohistidine intermediate; for HPr activity" evidence="4">
    <location>
        <position position="299"/>
    </location>
</feature>
<feature type="modified residue" description="Phosphohistidine; by HPr" evidence="8">
    <location>
        <position position="62"/>
    </location>
</feature>
<feature type="modified residue" description="Phosphohistidine; by EI" evidence="8">
    <location>
        <position position="299"/>
    </location>
</feature>
<protein>
    <recommendedName>
        <fullName evidence="1">Multiphosphoryl transfer protein</fullName>
        <shortName evidence="1">MTP</shortName>
    </recommendedName>
    <alternativeName>
        <fullName evidence="2">Diphosphoryl transfer protein</fullName>
        <shortName evidence="2">DTP</shortName>
    </alternativeName>
    <alternativeName>
        <fullName evidence="7">Phosphotransferase FPr protein</fullName>
    </alternativeName>
    <alternativeName>
        <fullName evidence="7">Pseudo-HPr</fullName>
    </alternativeName>
    <domain>
        <recommendedName>
            <fullName evidence="7">Phosphocarrier protein HPr</fullName>
            <shortName evidence="8">Protein H</shortName>
        </recommendedName>
    </domain>
    <domain>
        <recommendedName>
            <fullName evidence="7">PTS system fructose-specific EIIA component</fullName>
        </recommendedName>
        <alternativeName>
            <fullName evidence="7">EIIA-Fru</fullName>
        </alternativeName>
        <alternativeName>
            <fullName evidence="7">EIII-Fru</fullName>
        </alternativeName>
        <alternativeName>
            <fullName evidence="7">Fructose-specific phosphotransferase enzyme IIA component</fullName>
        </alternativeName>
    </domain>
</protein>
<name>PTFAH_SALTY</name>
<organism>
    <name type="scientific">Salmonella typhimurium (strain LT2 / SGSC1412 / ATCC 700720)</name>
    <dbReference type="NCBI Taxonomy" id="99287"/>
    <lineage>
        <taxon>Bacteria</taxon>
        <taxon>Pseudomonadati</taxon>
        <taxon>Pseudomonadota</taxon>
        <taxon>Gammaproteobacteria</taxon>
        <taxon>Enterobacterales</taxon>
        <taxon>Enterobacteriaceae</taxon>
        <taxon>Salmonella</taxon>
    </lineage>
</organism>
<evidence type="ECO:0000250" key="1">
    <source>
        <dbReference type="UniProtKB" id="P44715"/>
    </source>
</evidence>
<evidence type="ECO:0000250" key="2">
    <source>
        <dbReference type="UniProtKB" id="P69811"/>
    </source>
</evidence>
<evidence type="ECO:0000255" key="3">
    <source>
        <dbReference type="PROSITE-ProRule" id="PRU00417"/>
    </source>
</evidence>
<evidence type="ECO:0000255" key="4">
    <source>
        <dbReference type="PROSITE-ProRule" id="PRU00681"/>
    </source>
</evidence>
<evidence type="ECO:0000269" key="5">
    <source>
    </source>
</evidence>
<evidence type="ECO:0000269" key="6">
    <source>
    </source>
</evidence>
<evidence type="ECO:0000303" key="7">
    <source>
    </source>
</evidence>
<evidence type="ECO:0000305" key="8"/>